<organism>
    <name type="scientific">Danio rerio</name>
    <name type="common">Zebrafish</name>
    <name type="synonym">Brachydanio rerio</name>
    <dbReference type="NCBI Taxonomy" id="7955"/>
    <lineage>
        <taxon>Eukaryota</taxon>
        <taxon>Metazoa</taxon>
        <taxon>Chordata</taxon>
        <taxon>Craniata</taxon>
        <taxon>Vertebrata</taxon>
        <taxon>Euteleostomi</taxon>
        <taxon>Actinopterygii</taxon>
        <taxon>Neopterygii</taxon>
        <taxon>Teleostei</taxon>
        <taxon>Ostariophysi</taxon>
        <taxon>Cypriniformes</taxon>
        <taxon>Danionidae</taxon>
        <taxon>Danioninae</taxon>
        <taxon>Danio</taxon>
    </lineage>
</organism>
<evidence type="ECO:0000250" key="1"/>
<evidence type="ECO:0000250" key="2">
    <source>
        <dbReference type="UniProtKB" id="Q9NZC7"/>
    </source>
</evidence>
<evidence type="ECO:0000255" key="3">
    <source>
        <dbReference type="PROSITE-ProRule" id="PRU00224"/>
    </source>
</evidence>
<evidence type="ECO:0000256" key="4">
    <source>
        <dbReference type="SAM" id="MobiDB-lite"/>
    </source>
</evidence>
<evidence type="ECO:0000305" key="5"/>
<comment type="function">
    <text evidence="2">Putative oxidoreductase. Acts as a tumor suppressor and plays a role in apoptosis. May function synergistically with p53/TP53 to control genotoxic stress-induced cell death. Plays a role in TGFB1 signaling and TGFB1-mediated cell death. May also play a role in tumor necrosis factor (TNF)-mediated cell death. Required for normal bone development. Inhibits Wnt signaling (By similarity).</text>
</comment>
<comment type="subcellular location">
    <subcellularLocation>
        <location evidence="2">Cytoplasm</location>
    </subcellularLocation>
    <subcellularLocation>
        <location evidence="2">Mitochondrion</location>
    </subcellularLocation>
    <subcellularLocation>
        <location evidence="2">Golgi apparatus</location>
    </subcellularLocation>
    <subcellularLocation>
        <location evidence="2">Lysosome</location>
    </subcellularLocation>
</comment>
<comment type="similarity">
    <text evidence="5">Belongs to the short-chain dehydrogenases/reductases (SDR) family.</text>
</comment>
<proteinExistence type="evidence at transcript level"/>
<keyword id="KW-0053">Apoptosis</keyword>
<keyword id="KW-0963">Cytoplasm</keyword>
<keyword id="KW-0333">Golgi apparatus</keyword>
<keyword id="KW-0458">Lysosome</keyword>
<keyword id="KW-0496">Mitochondrion</keyword>
<keyword id="KW-0521">NADP</keyword>
<keyword id="KW-0560">Oxidoreductase</keyword>
<keyword id="KW-0597">Phosphoprotein</keyword>
<keyword id="KW-1185">Reference proteome</keyword>
<keyword id="KW-0677">Repeat</keyword>
<keyword id="KW-0879">Wnt signaling pathway</keyword>
<feature type="chain" id="PRO_0000054819" description="WW domain-containing oxidoreductase">
    <location>
        <begin position="1"/>
        <end position="412"/>
    </location>
</feature>
<feature type="domain" description="WW 1" evidence="3">
    <location>
        <begin position="16"/>
        <end position="49"/>
    </location>
</feature>
<feature type="domain" description="WW 2" evidence="3">
    <location>
        <begin position="57"/>
        <end position="90"/>
    </location>
</feature>
<feature type="region of interest" description="Disordered" evidence="4">
    <location>
        <begin position="1"/>
        <end position="24"/>
    </location>
</feature>
<feature type="short sequence motif" description="Nuclear localization signal" evidence="1">
    <location>
        <begin position="50"/>
        <end position="55"/>
    </location>
</feature>
<feature type="active site" description="Proton acceptor" evidence="1">
    <location>
        <position position="290"/>
    </location>
</feature>
<feature type="binding site" evidence="1">
    <location>
        <begin position="128"/>
        <end position="134"/>
    </location>
    <ligand>
        <name>NADP(+)</name>
        <dbReference type="ChEBI" id="CHEBI:58349"/>
    </ligand>
</feature>
<feature type="binding site" evidence="1">
    <location>
        <position position="257"/>
    </location>
    <ligand>
        <name>substrate</name>
    </ligand>
</feature>
<accession>Q803A8</accession>
<reference key="1">
    <citation type="submission" date="2003-01" db="EMBL/GenBank/DDBJ databases">
        <authorList>
            <consortium name="NIH - Zebrafish Gene Collection (ZGC) project"/>
        </authorList>
    </citation>
    <scope>NUCLEOTIDE SEQUENCE [LARGE SCALE MRNA]</scope>
    <source>
        <strain>AB</strain>
    </source>
</reference>
<sequence>MAALKYAGMEDTDSEDELPPGWEERSTKDGWVYYANHEEMKTQWEHPKTGKKKRCAGALPYGWEQETDDKGQIFYVDHINKRKTYFDPRQAFTVEDMQVKPKRYDGNTGALEILHGQDLSDKVIIVTGANSGIGFETARSFALHGAHVILACRNQSRASKAASLIMGEWSKARVEVLPLDLASLRSVRQFAELFKATKLPLHVLVCNAAVCSQPWRLTEDGFESTFQICHLGHFLLVQLLQDVLRLSAPARVVVVSSESHRFTDLLDSCGNLDLDLLSPPQKNYWSLLAYNRAKLCNLLFSSELHRRMSPHGICCNALHPGSMMFTSIHRSWWLLTLLFSLARPFTKSMQQGAATTVYCAVAPELEGIGGMYFNNCFRCLPSPQAQDPAAALSLWELSERLVQERSTPPQVL</sequence>
<name>WWOX_DANRE</name>
<gene>
    <name type="primary">wwox</name>
</gene>
<dbReference type="EC" id="1.1.1.-"/>
<dbReference type="EMBL" id="BC044560">
    <property type="protein sequence ID" value="AAH44560.1"/>
    <property type="molecule type" value="mRNA"/>
</dbReference>
<dbReference type="RefSeq" id="NP_957207.1">
    <property type="nucleotide sequence ID" value="NM_200913.1"/>
</dbReference>
<dbReference type="SMR" id="Q803A8"/>
<dbReference type="FunCoup" id="Q803A8">
    <property type="interactions" value="235"/>
</dbReference>
<dbReference type="STRING" id="7955.ENSDARP00000124176"/>
<dbReference type="PaxDb" id="7955-ENSDARP00000020652"/>
<dbReference type="GeneID" id="393887"/>
<dbReference type="KEGG" id="dre:393887"/>
<dbReference type="AGR" id="ZFIN:ZDB-GENE-040426-858"/>
<dbReference type="CTD" id="51741"/>
<dbReference type="ZFIN" id="ZDB-GENE-040426-858">
    <property type="gene designation" value="wwox"/>
</dbReference>
<dbReference type="eggNOG" id="KOG1208">
    <property type="taxonomic scope" value="Eukaryota"/>
</dbReference>
<dbReference type="InParanoid" id="Q803A8"/>
<dbReference type="OrthoDB" id="9989144at2759"/>
<dbReference type="PhylomeDB" id="Q803A8"/>
<dbReference type="Reactome" id="R-DRE-1251985">
    <property type="pathway name" value="Nuclear signaling by ERBB4"/>
</dbReference>
<dbReference type="Reactome" id="R-DRE-8866904">
    <property type="pathway name" value="Negative regulation of activity of TFAP2 (AP-2) family transcription factors"/>
</dbReference>
<dbReference type="Reactome" id="R-DRE-8866907">
    <property type="pathway name" value="Activation of the TFAP2 (AP-2) family of transcription factors"/>
</dbReference>
<dbReference type="PRO" id="PR:Q803A8"/>
<dbReference type="Proteomes" id="UP000000437">
    <property type="component" value="Chromosome 25"/>
</dbReference>
<dbReference type="GO" id="GO:0005794">
    <property type="term" value="C:Golgi apparatus"/>
    <property type="evidence" value="ECO:0007669"/>
    <property type="project" value="UniProtKB-SubCell"/>
</dbReference>
<dbReference type="GO" id="GO:0005764">
    <property type="term" value="C:lysosome"/>
    <property type="evidence" value="ECO:0007669"/>
    <property type="project" value="UniProtKB-SubCell"/>
</dbReference>
<dbReference type="GO" id="GO:0005739">
    <property type="term" value="C:mitochondrion"/>
    <property type="evidence" value="ECO:0007669"/>
    <property type="project" value="UniProtKB-SubCell"/>
</dbReference>
<dbReference type="GO" id="GO:0016491">
    <property type="term" value="F:oxidoreductase activity"/>
    <property type="evidence" value="ECO:0007669"/>
    <property type="project" value="UniProtKB-KW"/>
</dbReference>
<dbReference type="GO" id="GO:0006915">
    <property type="term" value="P:apoptotic process"/>
    <property type="evidence" value="ECO:0007669"/>
    <property type="project" value="UniProtKB-KW"/>
</dbReference>
<dbReference type="GO" id="GO:0006874">
    <property type="term" value="P:intracellular calcium ion homeostasis"/>
    <property type="evidence" value="ECO:0000315"/>
    <property type="project" value="ZFIN"/>
</dbReference>
<dbReference type="GO" id="GO:0016055">
    <property type="term" value="P:Wnt signaling pathway"/>
    <property type="evidence" value="ECO:0007669"/>
    <property type="project" value="UniProtKB-KW"/>
</dbReference>
<dbReference type="CDD" id="cd09809">
    <property type="entry name" value="human_WWOX_like_SDR_c-like"/>
    <property type="match status" value="1"/>
</dbReference>
<dbReference type="CDD" id="cd00201">
    <property type="entry name" value="WW"/>
    <property type="match status" value="2"/>
</dbReference>
<dbReference type="FunFam" id="2.20.70.10:FF:000032">
    <property type="entry name" value="WW domain containing oxidoreductase"/>
    <property type="match status" value="1"/>
</dbReference>
<dbReference type="FunFam" id="3.40.50.720:FF:000353">
    <property type="entry name" value="WW domain-containing oxidoreductase"/>
    <property type="match status" value="1"/>
</dbReference>
<dbReference type="Gene3D" id="2.20.70.10">
    <property type="match status" value="2"/>
</dbReference>
<dbReference type="Gene3D" id="3.40.50.720">
    <property type="entry name" value="NAD(P)-binding Rossmann-like Domain"/>
    <property type="match status" value="1"/>
</dbReference>
<dbReference type="InterPro" id="IPR036291">
    <property type="entry name" value="NAD(P)-bd_dom_sf"/>
</dbReference>
<dbReference type="InterPro" id="IPR002347">
    <property type="entry name" value="SDR_fam"/>
</dbReference>
<dbReference type="InterPro" id="IPR001202">
    <property type="entry name" value="WW_dom"/>
</dbReference>
<dbReference type="InterPro" id="IPR036020">
    <property type="entry name" value="WW_dom_sf"/>
</dbReference>
<dbReference type="InterPro" id="IPR042732">
    <property type="entry name" value="WWOX_SDR_c-like"/>
</dbReference>
<dbReference type="PANTHER" id="PTHR43157:SF31">
    <property type="entry name" value="PHOSPHATIDYLINOSITOL-GLYCAN BIOSYNTHESIS CLASS F PROTEIN"/>
    <property type="match status" value="1"/>
</dbReference>
<dbReference type="PANTHER" id="PTHR43157">
    <property type="entry name" value="PHOSPHATIDYLINOSITOL-GLYCAN BIOSYNTHESIS CLASS F PROTEIN-RELATED"/>
    <property type="match status" value="1"/>
</dbReference>
<dbReference type="Pfam" id="PF00106">
    <property type="entry name" value="adh_short"/>
    <property type="match status" value="1"/>
</dbReference>
<dbReference type="Pfam" id="PF00397">
    <property type="entry name" value="WW"/>
    <property type="match status" value="1"/>
</dbReference>
<dbReference type="PRINTS" id="PR00081">
    <property type="entry name" value="GDHRDH"/>
</dbReference>
<dbReference type="SMART" id="SM00456">
    <property type="entry name" value="WW"/>
    <property type="match status" value="2"/>
</dbReference>
<dbReference type="SUPFAM" id="SSF51735">
    <property type="entry name" value="NAD(P)-binding Rossmann-fold domains"/>
    <property type="match status" value="1"/>
</dbReference>
<dbReference type="SUPFAM" id="SSF51045">
    <property type="entry name" value="WW domain"/>
    <property type="match status" value="2"/>
</dbReference>
<dbReference type="PROSITE" id="PS01159">
    <property type="entry name" value="WW_DOMAIN_1"/>
    <property type="match status" value="1"/>
</dbReference>
<dbReference type="PROSITE" id="PS50020">
    <property type="entry name" value="WW_DOMAIN_2"/>
    <property type="match status" value="2"/>
</dbReference>
<protein>
    <recommendedName>
        <fullName>WW domain-containing oxidoreductase</fullName>
        <ecNumber>1.1.1.-</ecNumber>
    </recommendedName>
</protein>